<protein>
    <recommendedName>
        <fullName>Homeobox protein knotted-1-like 12</fullName>
    </recommendedName>
    <alternativeName>
        <fullName>Homeobox protein HOS3</fullName>
    </alternativeName>
    <alternativeName>
        <fullName>Homeobox protein OSH15</fullName>
    </alternativeName>
    <alternativeName>
        <fullName>Homeobox protein knotted-1-like 3</fullName>
        <shortName>Oskn3</shortName>
    </alternativeName>
</protein>
<proteinExistence type="evidence at transcript level"/>
<accession>O65034</accession>
<accession>A2YHU1</accession>
<evidence type="ECO:0000255" key="1">
    <source>
        <dbReference type="PROSITE-ProRule" id="PRU00108"/>
    </source>
</evidence>
<evidence type="ECO:0000255" key="2">
    <source>
        <dbReference type="PROSITE-ProRule" id="PRU00559"/>
    </source>
</evidence>
<evidence type="ECO:0000256" key="3">
    <source>
        <dbReference type="SAM" id="MobiDB-lite"/>
    </source>
</evidence>
<evidence type="ECO:0000269" key="4">
    <source>
    </source>
</evidence>
<evidence type="ECO:0000305" key="5"/>
<gene>
    <name type="primary">OSH15</name>
    <name type="synonym">HOS3</name>
    <name type="ORF">OsI_023884</name>
</gene>
<sequence>MDQSFGNLGGGGGAGGSGKAAASSFLQLPLSTAAAATAYYGTPLALHQAAAAAGPSQYHGHGHPHHGGGHHHSKHGGAGGGEISAAEAESIKAKIMAHPQYSALLAAYLDCQKVGAPPEVLERLTATAAKLDARPPGRHDARDPELDQFMEAYCNMLAKYREELTRPIDEAMEFLKRVESQLDTIAGGAHGGGAGSARLLLADGKSECVGSSEDDMDPSGRENEPPEIDPRAEDKELKFQLLKKYSGYLSSLRQEFSKKKKKGKLPKEARQKLLHWWELHYKWPYPSETEKIALAESTGLDQKQINNWFINQRKRHWKPSEDMPFVMMEGFHPQNAAALYMDGPFMADGMYRLGS</sequence>
<name>KNOSC_ORYSI</name>
<organism>
    <name type="scientific">Oryza sativa subsp. indica</name>
    <name type="common">Rice</name>
    <dbReference type="NCBI Taxonomy" id="39946"/>
    <lineage>
        <taxon>Eukaryota</taxon>
        <taxon>Viridiplantae</taxon>
        <taxon>Streptophyta</taxon>
        <taxon>Embryophyta</taxon>
        <taxon>Tracheophyta</taxon>
        <taxon>Spermatophyta</taxon>
        <taxon>Magnoliopsida</taxon>
        <taxon>Liliopsida</taxon>
        <taxon>Poales</taxon>
        <taxon>Poaceae</taxon>
        <taxon>BOP clade</taxon>
        <taxon>Oryzoideae</taxon>
        <taxon>Oryzeae</taxon>
        <taxon>Oryzinae</taxon>
        <taxon>Oryza</taxon>
        <taxon>Oryza sativa</taxon>
    </lineage>
</organism>
<feature type="chain" id="PRO_0000360016" description="Homeobox protein knotted-1-like 12">
    <location>
        <begin position="1"/>
        <end position="355"/>
    </location>
</feature>
<feature type="domain" description="ELK" evidence="2">
    <location>
        <begin position="236"/>
        <end position="256"/>
    </location>
</feature>
<feature type="DNA-binding region" description="Homeobox; TALE-type" evidence="1">
    <location>
        <begin position="257"/>
        <end position="320"/>
    </location>
</feature>
<feature type="region of interest" description="Disordered" evidence="3">
    <location>
        <begin position="52"/>
        <end position="82"/>
    </location>
</feature>
<feature type="region of interest" description="Disordered" evidence="3">
    <location>
        <begin position="207"/>
        <end position="233"/>
    </location>
</feature>
<feature type="compositionally biased region" description="Basic residues" evidence="3">
    <location>
        <begin position="60"/>
        <end position="75"/>
    </location>
</feature>
<feature type="compositionally biased region" description="Basic and acidic residues" evidence="3">
    <location>
        <begin position="218"/>
        <end position="233"/>
    </location>
</feature>
<keyword id="KW-0238">DNA-binding</keyword>
<keyword id="KW-0371">Homeobox</keyword>
<keyword id="KW-0539">Nucleus</keyword>
<keyword id="KW-1185">Reference proteome</keyword>
<reference key="1">
    <citation type="journal article" date="1999" name="Plant Mol. Biol.">
        <title>Characterization of the KNOX class homeobox genes Oskn2 and Oskn3 identified in a collection of cDNA libraries covering the early stages of rice embryogenesis.</title>
        <authorList>
            <person name="Postma-Haarsma A.D."/>
            <person name="Verwoert I.I.G."/>
            <person name="Stronk O.P."/>
            <person name="Koster J."/>
            <person name="Lamers G.E.M."/>
            <person name="Hoge J.H."/>
            <person name="Meijer A.H."/>
        </authorList>
    </citation>
    <scope>NUCLEOTIDE SEQUENCE [MRNA]</scope>
    <scope>FUNCTION</scope>
    <scope>DEVELOPMENTAL STAGE</scope>
    <source>
        <strain>cv. IR58</strain>
    </source>
</reference>
<reference key="2">
    <citation type="journal article" date="2005" name="PLoS Biol.">
        <title>The genomes of Oryza sativa: a history of duplications.</title>
        <authorList>
            <person name="Yu J."/>
            <person name="Wang J."/>
            <person name="Lin W."/>
            <person name="Li S."/>
            <person name="Li H."/>
            <person name="Zhou J."/>
            <person name="Ni P."/>
            <person name="Dong W."/>
            <person name="Hu S."/>
            <person name="Zeng C."/>
            <person name="Zhang J."/>
            <person name="Zhang Y."/>
            <person name="Li R."/>
            <person name="Xu Z."/>
            <person name="Li S."/>
            <person name="Li X."/>
            <person name="Zheng H."/>
            <person name="Cong L."/>
            <person name="Lin L."/>
            <person name="Yin J."/>
            <person name="Geng J."/>
            <person name="Li G."/>
            <person name="Shi J."/>
            <person name="Liu J."/>
            <person name="Lv H."/>
            <person name="Li J."/>
            <person name="Wang J."/>
            <person name="Deng Y."/>
            <person name="Ran L."/>
            <person name="Shi X."/>
            <person name="Wang X."/>
            <person name="Wu Q."/>
            <person name="Li C."/>
            <person name="Ren X."/>
            <person name="Wang J."/>
            <person name="Wang X."/>
            <person name="Li D."/>
            <person name="Liu D."/>
            <person name="Zhang X."/>
            <person name="Ji Z."/>
            <person name="Zhao W."/>
            <person name="Sun Y."/>
            <person name="Zhang Z."/>
            <person name="Bao J."/>
            <person name="Han Y."/>
            <person name="Dong L."/>
            <person name="Ji J."/>
            <person name="Chen P."/>
            <person name="Wu S."/>
            <person name="Liu J."/>
            <person name="Xiao Y."/>
            <person name="Bu D."/>
            <person name="Tan J."/>
            <person name="Yang L."/>
            <person name="Ye C."/>
            <person name="Zhang J."/>
            <person name="Xu J."/>
            <person name="Zhou Y."/>
            <person name="Yu Y."/>
            <person name="Zhang B."/>
            <person name="Zhuang S."/>
            <person name="Wei H."/>
            <person name="Liu B."/>
            <person name="Lei M."/>
            <person name="Yu H."/>
            <person name="Li Y."/>
            <person name="Xu H."/>
            <person name="Wei S."/>
            <person name="He X."/>
            <person name="Fang L."/>
            <person name="Zhang Z."/>
            <person name="Zhang Y."/>
            <person name="Huang X."/>
            <person name="Su Z."/>
            <person name="Tong W."/>
            <person name="Li J."/>
            <person name="Tong Z."/>
            <person name="Li S."/>
            <person name="Ye J."/>
            <person name="Wang L."/>
            <person name="Fang L."/>
            <person name="Lei T."/>
            <person name="Chen C.-S."/>
            <person name="Chen H.-C."/>
            <person name="Xu Z."/>
            <person name="Li H."/>
            <person name="Huang H."/>
            <person name="Zhang F."/>
            <person name="Xu H."/>
            <person name="Li N."/>
            <person name="Zhao C."/>
            <person name="Li S."/>
            <person name="Dong L."/>
            <person name="Huang Y."/>
            <person name="Li L."/>
            <person name="Xi Y."/>
            <person name="Qi Q."/>
            <person name="Li W."/>
            <person name="Zhang B."/>
            <person name="Hu W."/>
            <person name="Zhang Y."/>
            <person name="Tian X."/>
            <person name="Jiao Y."/>
            <person name="Liang X."/>
            <person name="Jin J."/>
            <person name="Gao L."/>
            <person name="Zheng W."/>
            <person name="Hao B."/>
            <person name="Liu S.-M."/>
            <person name="Wang W."/>
            <person name="Yuan L."/>
            <person name="Cao M."/>
            <person name="McDermott J."/>
            <person name="Samudrala R."/>
            <person name="Wang J."/>
            <person name="Wong G.K.-S."/>
            <person name="Yang H."/>
        </authorList>
    </citation>
    <scope>NUCLEOTIDE SEQUENCE [LARGE SCALE GENOMIC DNA]</scope>
    <source>
        <strain>cv. 93-11</strain>
    </source>
</reference>
<reference key="3">
    <citation type="journal article" date="2008" name="FEBS J.">
        <title>Genome-wide identification, classification, evolutionary expansion and expression analyses of homeobox genes in rice.</title>
        <authorList>
            <person name="Jain M."/>
            <person name="Tyagi A.K."/>
            <person name="Khurana J.P."/>
        </authorList>
    </citation>
    <scope>GENE FAMILY</scope>
    <scope>NOMENCLATURE</scope>
</reference>
<comment type="function">
    <text evidence="4">Probable transcription factor that may be involved in shoot formation during embryogenesis.</text>
</comment>
<comment type="subcellular location">
    <subcellularLocation>
        <location evidence="1 2">Nucleus</location>
    </subcellularLocation>
</comment>
<comment type="developmental stage">
    <text evidence="4">Expressed in the embryo at 4 days after pollination (DAP) in the ventral and basal part of the embryo including the initial of the shoot apical meristem (SAM). At 5 DAP, expressed at the ventral side of the embryo, but the expression within SAM is down-regulated. At 7 DAP, expression is restricted to the boundaries between the embryonic organs, between the scutellum and the coleoptile, the coleoptile and the second leaf primordium, the shoot apical meristem and the first leaf primordium, the first leaf primordium and the coleoptile, the coleoptile and the epiblast and at the tip of the epiblast, but not in the leaf primordia.</text>
</comment>
<comment type="similarity">
    <text evidence="2">Belongs to the TALE/KNOX homeobox family.</text>
</comment>
<comment type="sequence caution" evidence="5">
    <conflict type="miscellaneous discrepancy">
        <sequence resource="EMBL-CDS" id="AAC32818"/>
    </conflict>
    <text>Sequencing errors.</text>
</comment>
<dbReference type="EMBL" id="AF050181">
    <property type="protein sequence ID" value="AAC32818.1"/>
    <property type="status" value="ALT_SEQ"/>
    <property type="molecule type" value="mRNA"/>
</dbReference>
<dbReference type="EMBL" id="CM000132">
    <property type="status" value="NOT_ANNOTATED_CDS"/>
    <property type="molecule type" value="Genomic_DNA"/>
</dbReference>
<dbReference type="PIR" id="T02785">
    <property type="entry name" value="T02785"/>
</dbReference>
<dbReference type="SMR" id="O65034"/>
<dbReference type="STRING" id="39946.O65034"/>
<dbReference type="EnsemblPlants" id="BGIOSGA025091-TA">
    <property type="protein sequence ID" value="BGIOSGA025091-PA"/>
    <property type="gene ID" value="BGIOSGA025091"/>
</dbReference>
<dbReference type="EnsemblPlants" id="OsIR64_07g0001850.01">
    <property type="protein sequence ID" value="OsIR64_07g0001850.01"/>
    <property type="gene ID" value="OsIR64_07g0001850"/>
</dbReference>
<dbReference type="EnsemblPlants" id="OsMH63_07G001890_01">
    <property type="protein sequence ID" value="OsMH63_07G001890_01"/>
    <property type="gene ID" value="OsMH63_07G001890"/>
</dbReference>
<dbReference type="EnsemblPlants" id="OsPr106_07g0001790.01">
    <property type="protein sequence ID" value="OsPr106_07g0001790.01"/>
    <property type="gene ID" value="OsPr106_07g0001790"/>
</dbReference>
<dbReference type="Gramene" id="BGIOSGA025091-TA">
    <property type="protein sequence ID" value="BGIOSGA025091-PA"/>
    <property type="gene ID" value="BGIOSGA025091"/>
</dbReference>
<dbReference type="Gramene" id="OsIR64_07g0001850.01">
    <property type="protein sequence ID" value="OsIR64_07g0001850.01"/>
    <property type="gene ID" value="OsIR64_07g0001850"/>
</dbReference>
<dbReference type="Gramene" id="OsMH63_07G001890_01">
    <property type="protein sequence ID" value="OsMH63_07G001890_01"/>
    <property type="gene ID" value="OsMH63_07G001890"/>
</dbReference>
<dbReference type="Gramene" id="OsPr106_07g0001790.01">
    <property type="protein sequence ID" value="OsPr106_07g0001790.01"/>
    <property type="gene ID" value="OsPr106_07g0001790"/>
</dbReference>
<dbReference type="HOGENOM" id="CLU_040111_0_0_1"/>
<dbReference type="OMA" id="LEAYINC"/>
<dbReference type="Proteomes" id="UP000007015">
    <property type="component" value="Chromosome 7"/>
</dbReference>
<dbReference type="GO" id="GO:0005634">
    <property type="term" value="C:nucleus"/>
    <property type="evidence" value="ECO:0007669"/>
    <property type="project" value="UniProtKB-SubCell"/>
</dbReference>
<dbReference type="GO" id="GO:0003677">
    <property type="term" value="F:DNA binding"/>
    <property type="evidence" value="ECO:0007669"/>
    <property type="project" value="UniProtKB-KW"/>
</dbReference>
<dbReference type="GO" id="GO:0000981">
    <property type="term" value="F:DNA-binding transcription factor activity, RNA polymerase II-specific"/>
    <property type="evidence" value="ECO:0007669"/>
    <property type="project" value="InterPro"/>
</dbReference>
<dbReference type="CDD" id="cd00086">
    <property type="entry name" value="homeodomain"/>
    <property type="match status" value="1"/>
</dbReference>
<dbReference type="FunFam" id="1.10.10.60:FF:000076">
    <property type="entry name" value="Homeobox protein knotted-1-like 2"/>
    <property type="match status" value="1"/>
</dbReference>
<dbReference type="Gene3D" id="1.10.10.60">
    <property type="entry name" value="Homeodomain-like"/>
    <property type="match status" value="1"/>
</dbReference>
<dbReference type="InterPro" id="IPR005539">
    <property type="entry name" value="ELK_dom"/>
</dbReference>
<dbReference type="InterPro" id="IPR001356">
    <property type="entry name" value="HD"/>
</dbReference>
<dbReference type="InterPro" id="IPR017970">
    <property type="entry name" value="Homeobox_CS"/>
</dbReference>
<dbReference type="InterPro" id="IPR009057">
    <property type="entry name" value="Homeodomain-like_sf"/>
</dbReference>
<dbReference type="InterPro" id="IPR008422">
    <property type="entry name" value="KN_HD"/>
</dbReference>
<dbReference type="InterPro" id="IPR005540">
    <property type="entry name" value="KNOX1"/>
</dbReference>
<dbReference type="InterPro" id="IPR005541">
    <property type="entry name" value="KNOX2"/>
</dbReference>
<dbReference type="InterPro" id="IPR050224">
    <property type="entry name" value="TALE_homeobox"/>
</dbReference>
<dbReference type="PANTHER" id="PTHR11850">
    <property type="entry name" value="HOMEOBOX PROTEIN TRANSCRIPTION FACTORS"/>
    <property type="match status" value="1"/>
</dbReference>
<dbReference type="Pfam" id="PF03789">
    <property type="entry name" value="ELK"/>
    <property type="match status" value="1"/>
</dbReference>
<dbReference type="Pfam" id="PF05920">
    <property type="entry name" value="Homeobox_KN"/>
    <property type="match status" value="1"/>
</dbReference>
<dbReference type="Pfam" id="PF03790">
    <property type="entry name" value="KNOX1"/>
    <property type="match status" value="1"/>
</dbReference>
<dbReference type="Pfam" id="PF03791">
    <property type="entry name" value="KNOX2"/>
    <property type="match status" value="1"/>
</dbReference>
<dbReference type="SMART" id="SM01188">
    <property type="entry name" value="ELK"/>
    <property type="match status" value="1"/>
</dbReference>
<dbReference type="SMART" id="SM00389">
    <property type="entry name" value="HOX"/>
    <property type="match status" value="1"/>
</dbReference>
<dbReference type="SMART" id="SM01255">
    <property type="entry name" value="KNOX1"/>
    <property type="match status" value="1"/>
</dbReference>
<dbReference type="SMART" id="SM01256">
    <property type="entry name" value="KNOX2"/>
    <property type="match status" value="1"/>
</dbReference>
<dbReference type="SUPFAM" id="SSF46689">
    <property type="entry name" value="Homeodomain-like"/>
    <property type="match status" value="1"/>
</dbReference>
<dbReference type="PROSITE" id="PS51213">
    <property type="entry name" value="ELK"/>
    <property type="match status" value="1"/>
</dbReference>
<dbReference type="PROSITE" id="PS00027">
    <property type="entry name" value="HOMEOBOX_1"/>
    <property type="match status" value="1"/>
</dbReference>
<dbReference type="PROSITE" id="PS50071">
    <property type="entry name" value="HOMEOBOX_2"/>
    <property type="match status" value="1"/>
</dbReference>